<name>SYP_SHEB5</name>
<protein>
    <recommendedName>
        <fullName evidence="1">Proline--tRNA ligase</fullName>
        <ecNumber evidence="1">6.1.1.15</ecNumber>
    </recommendedName>
    <alternativeName>
        <fullName evidence="1">Prolyl-tRNA synthetase</fullName>
        <shortName evidence="1">ProRS</shortName>
    </alternativeName>
</protein>
<accession>A3D6H7</accession>
<sequence>MRVSKYLLSTQKETPANAEVISHQLMLRAGMIRRNASGLYSYLPTGLRVLRKVEAIVREEMNKAGAIEILMPMVQPADLWVETGRWEKFGPELLRFKDRHNRDFVLGPTHEEVITDLIRKEVSSYKQLPLNLYQIQTKFRDEVRPRFGMMRSREFLMKDAYSFHLDVDTMNETYEAMYNAYSNILTRMGLAFRPVLADTGSIGGSMSHEFHVLAQSGEDLIAYSTGSDYAANIEKAESPVPTEPRGAATEELRLVDTPNAKTIAELVEQFDLDITKTVKTLIVVGASEATPLVALIVRGDHELNEVKADKLDLVASPVEMAPEALIRDAIGAGPGSLGPIGLNIPIVIDHSVSVMSDFAAGANVDDKHYFGINWERDLPTAQVADIRNVVEGEPTPDGSGTYAMARGIEVGHIFQLGTNYSKSMNATVLDENGKSQVLLMGCYGVGVSRIVAAAIEQNFDDRGIIWPEAIAPFSVGILPMNMHKSHRVTDIAEQLYKDLNEAGIDVLLDDRKERPGVMFADMELIGIPHTVVIGDRNIDAGVFEYKNRRTGEKQDIPFDQLLDLLKNAVKG</sequence>
<keyword id="KW-0030">Aminoacyl-tRNA synthetase</keyword>
<keyword id="KW-0067">ATP-binding</keyword>
<keyword id="KW-0963">Cytoplasm</keyword>
<keyword id="KW-0436">Ligase</keyword>
<keyword id="KW-0547">Nucleotide-binding</keyword>
<keyword id="KW-0648">Protein biosynthesis</keyword>
<keyword id="KW-1185">Reference proteome</keyword>
<evidence type="ECO:0000255" key="1">
    <source>
        <dbReference type="HAMAP-Rule" id="MF_01569"/>
    </source>
</evidence>
<reference key="1">
    <citation type="submission" date="2007-02" db="EMBL/GenBank/DDBJ databases">
        <title>Complete sequence of chromosome of Shewanella baltica OS155.</title>
        <authorList>
            <consortium name="US DOE Joint Genome Institute"/>
            <person name="Copeland A."/>
            <person name="Lucas S."/>
            <person name="Lapidus A."/>
            <person name="Barry K."/>
            <person name="Detter J.C."/>
            <person name="Glavina del Rio T."/>
            <person name="Hammon N."/>
            <person name="Israni S."/>
            <person name="Dalin E."/>
            <person name="Tice H."/>
            <person name="Pitluck S."/>
            <person name="Sims D.R."/>
            <person name="Brettin T."/>
            <person name="Bruce D."/>
            <person name="Han C."/>
            <person name="Tapia R."/>
            <person name="Brainard J."/>
            <person name="Schmutz J."/>
            <person name="Larimer F."/>
            <person name="Land M."/>
            <person name="Hauser L."/>
            <person name="Kyrpides N."/>
            <person name="Mikhailova N."/>
            <person name="Brettar I."/>
            <person name="Klappenbach J."/>
            <person name="Konstantinidis K."/>
            <person name="Rodrigues J."/>
            <person name="Tiedje J."/>
            <person name="Richardson P."/>
        </authorList>
    </citation>
    <scope>NUCLEOTIDE SEQUENCE [LARGE SCALE GENOMIC DNA]</scope>
    <source>
        <strain>OS155 / ATCC BAA-1091</strain>
    </source>
</reference>
<dbReference type="EC" id="6.1.1.15" evidence="1"/>
<dbReference type="EMBL" id="CP000563">
    <property type="protein sequence ID" value="ABN62340.1"/>
    <property type="molecule type" value="Genomic_DNA"/>
</dbReference>
<dbReference type="RefSeq" id="WP_011847255.1">
    <property type="nucleotide sequence ID" value="NC_009052.1"/>
</dbReference>
<dbReference type="SMR" id="A3D6H7"/>
<dbReference type="STRING" id="325240.Sbal_2856"/>
<dbReference type="KEGG" id="sbl:Sbal_2856"/>
<dbReference type="HOGENOM" id="CLU_016739_0_0_6"/>
<dbReference type="OrthoDB" id="9809052at2"/>
<dbReference type="Proteomes" id="UP000001557">
    <property type="component" value="Chromosome"/>
</dbReference>
<dbReference type="GO" id="GO:0005829">
    <property type="term" value="C:cytosol"/>
    <property type="evidence" value="ECO:0007669"/>
    <property type="project" value="TreeGrafter"/>
</dbReference>
<dbReference type="GO" id="GO:0002161">
    <property type="term" value="F:aminoacyl-tRNA deacylase activity"/>
    <property type="evidence" value="ECO:0007669"/>
    <property type="project" value="InterPro"/>
</dbReference>
<dbReference type="GO" id="GO:0005524">
    <property type="term" value="F:ATP binding"/>
    <property type="evidence" value="ECO:0007669"/>
    <property type="project" value="UniProtKB-UniRule"/>
</dbReference>
<dbReference type="GO" id="GO:0004827">
    <property type="term" value="F:proline-tRNA ligase activity"/>
    <property type="evidence" value="ECO:0007669"/>
    <property type="project" value="UniProtKB-UniRule"/>
</dbReference>
<dbReference type="GO" id="GO:0006433">
    <property type="term" value="P:prolyl-tRNA aminoacylation"/>
    <property type="evidence" value="ECO:0007669"/>
    <property type="project" value="UniProtKB-UniRule"/>
</dbReference>
<dbReference type="CDD" id="cd04334">
    <property type="entry name" value="ProRS-INS"/>
    <property type="match status" value="1"/>
</dbReference>
<dbReference type="CDD" id="cd00861">
    <property type="entry name" value="ProRS_anticodon_short"/>
    <property type="match status" value="1"/>
</dbReference>
<dbReference type="CDD" id="cd00779">
    <property type="entry name" value="ProRS_core_prok"/>
    <property type="match status" value="1"/>
</dbReference>
<dbReference type="FunFam" id="3.30.930.10:FF:000015">
    <property type="entry name" value="Proline--tRNA ligase"/>
    <property type="match status" value="1"/>
</dbReference>
<dbReference type="FunFam" id="3.30.930.10:FF:000043">
    <property type="entry name" value="Proline--tRNA ligase"/>
    <property type="match status" value="1"/>
</dbReference>
<dbReference type="FunFam" id="3.40.50.800:FF:000006">
    <property type="entry name" value="Proline--tRNA ligase"/>
    <property type="match status" value="1"/>
</dbReference>
<dbReference type="FunFam" id="3.90.960.10:FF:000001">
    <property type="entry name" value="Proline--tRNA ligase"/>
    <property type="match status" value="1"/>
</dbReference>
<dbReference type="Gene3D" id="3.40.50.800">
    <property type="entry name" value="Anticodon-binding domain"/>
    <property type="match status" value="1"/>
</dbReference>
<dbReference type="Gene3D" id="3.30.930.10">
    <property type="entry name" value="Bira Bifunctional Protein, Domain 2"/>
    <property type="match status" value="2"/>
</dbReference>
<dbReference type="Gene3D" id="3.90.960.10">
    <property type="entry name" value="YbaK/aminoacyl-tRNA synthetase-associated domain"/>
    <property type="match status" value="1"/>
</dbReference>
<dbReference type="HAMAP" id="MF_01569">
    <property type="entry name" value="Pro_tRNA_synth_type1"/>
    <property type="match status" value="1"/>
</dbReference>
<dbReference type="InterPro" id="IPR002314">
    <property type="entry name" value="aa-tRNA-synt_IIb"/>
</dbReference>
<dbReference type="InterPro" id="IPR006195">
    <property type="entry name" value="aa-tRNA-synth_II"/>
</dbReference>
<dbReference type="InterPro" id="IPR045864">
    <property type="entry name" value="aa-tRNA-synth_II/BPL/LPL"/>
</dbReference>
<dbReference type="InterPro" id="IPR004154">
    <property type="entry name" value="Anticodon-bd"/>
</dbReference>
<dbReference type="InterPro" id="IPR036621">
    <property type="entry name" value="Anticodon-bd_dom_sf"/>
</dbReference>
<dbReference type="InterPro" id="IPR002316">
    <property type="entry name" value="Pro-tRNA-ligase_IIa"/>
</dbReference>
<dbReference type="InterPro" id="IPR004500">
    <property type="entry name" value="Pro-tRNA-synth_IIa_bac-type"/>
</dbReference>
<dbReference type="InterPro" id="IPR023717">
    <property type="entry name" value="Pro-tRNA-Synthase_IIa_type1"/>
</dbReference>
<dbReference type="InterPro" id="IPR050062">
    <property type="entry name" value="Pro-tRNA_synthetase"/>
</dbReference>
<dbReference type="InterPro" id="IPR044140">
    <property type="entry name" value="ProRS_anticodon_short"/>
</dbReference>
<dbReference type="InterPro" id="IPR033730">
    <property type="entry name" value="ProRS_core_prok"/>
</dbReference>
<dbReference type="InterPro" id="IPR036754">
    <property type="entry name" value="YbaK/aa-tRNA-synt-asso_dom_sf"/>
</dbReference>
<dbReference type="InterPro" id="IPR007214">
    <property type="entry name" value="YbaK/aa-tRNA-synth-assoc-dom"/>
</dbReference>
<dbReference type="NCBIfam" id="NF006625">
    <property type="entry name" value="PRK09194.1"/>
    <property type="match status" value="1"/>
</dbReference>
<dbReference type="NCBIfam" id="TIGR00409">
    <property type="entry name" value="proS_fam_II"/>
    <property type="match status" value="1"/>
</dbReference>
<dbReference type="PANTHER" id="PTHR42753">
    <property type="entry name" value="MITOCHONDRIAL RIBOSOME PROTEIN L39/PROLYL-TRNA LIGASE FAMILY MEMBER"/>
    <property type="match status" value="1"/>
</dbReference>
<dbReference type="PANTHER" id="PTHR42753:SF2">
    <property type="entry name" value="PROLINE--TRNA LIGASE"/>
    <property type="match status" value="1"/>
</dbReference>
<dbReference type="Pfam" id="PF03129">
    <property type="entry name" value="HGTP_anticodon"/>
    <property type="match status" value="1"/>
</dbReference>
<dbReference type="Pfam" id="PF00587">
    <property type="entry name" value="tRNA-synt_2b"/>
    <property type="match status" value="1"/>
</dbReference>
<dbReference type="Pfam" id="PF04073">
    <property type="entry name" value="tRNA_edit"/>
    <property type="match status" value="1"/>
</dbReference>
<dbReference type="PIRSF" id="PIRSF001535">
    <property type="entry name" value="ProRS_1"/>
    <property type="match status" value="1"/>
</dbReference>
<dbReference type="PRINTS" id="PR01046">
    <property type="entry name" value="TRNASYNTHPRO"/>
</dbReference>
<dbReference type="SUPFAM" id="SSF52954">
    <property type="entry name" value="Class II aaRS ABD-related"/>
    <property type="match status" value="1"/>
</dbReference>
<dbReference type="SUPFAM" id="SSF55681">
    <property type="entry name" value="Class II aaRS and biotin synthetases"/>
    <property type="match status" value="1"/>
</dbReference>
<dbReference type="SUPFAM" id="SSF55826">
    <property type="entry name" value="YbaK/ProRS associated domain"/>
    <property type="match status" value="1"/>
</dbReference>
<dbReference type="PROSITE" id="PS50862">
    <property type="entry name" value="AA_TRNA_LIGASE_II"/>
    <property type="match status" value="1"/>
</dbReference>
<comment type="function">
    <text evidence="1">Catalyzes the attachment of proline to tRNA(Pro) in a two-step reaction: proline is first activated by ATP to form Pro-AMP and then transferred to the acceptor end of tRNA(Pro). As ProRS can inadvertently accommodate and process non-cognate amino acids such as alanine and cysteine, to avoid such errors it has two additional distinct editing activities against alanine. One activity is designated as 'pretransfer' editing and involves the tRNA(Pro)-independent hydrolysis of activated Ala-AMP. The other activity is designated 'posttransfer' editing and involves deacylation of mischarged Ala-tRNA(Pro). The misacylated Cys-tRNA(Pro) is not edited by ProRS.</text>
</comment>
<comment type="catalytic activity">
    <reaction evidence="1">
        <text>tRNA(Pro) + L-proline + ATP = L-prolyl-tRNA(Pro) + AMP + diphosphate</text>
        <dbReference type="Rhea" id="RHEA:14305"/>
        <dbReference type="Rhea" id="RHEA-COMP:9700"/>
        <dbReference type="Rhea" id="RHEA-COMP:9702"/>
        <dbReference type="ChEBI" id="CHEBI:30616"/>
        <dbReference type="ChEBI" id="CHEBI:33019"/>
        <dbReference type="ChEBI" id="CHEBI:60039"/>
        <dbReference type="ChEBI" id="CHEBI:78442"/>
        <dbReference type="ChEBI" id="CHEBI:78532"/>
        <dbReference type="ChEBI" id="CHEBI:456215"/>
        <dbReference type="EC" id="6.1.1.15"/>
    </reaction>
</comment>
<comment type="subunit">
    <text evidence="1">Homodimer.</text>
</comment>
<comment type="subcellular location">
    <subcellularLocation>
        <location evidence="1">Cytoplasm</location>
    </subcellularLocation>
</comment>
<comment type="domain">
    <text evidence="1">Consists of three domains: the N-terminal catalytic domain, the editing domain and the C-terminal anticodon-binding domain.</text>
</comment>
<comment type="similarity">
    <text evidence="1">Belongs to the class-II aminoacyl-tRNA synthetase family. ProS type 1 subfamily.</text>
</comment>
<organism>
    <name type="scientific">Shewanella baltica (strain OS155 / ATCC BAA-1091)</name>
    <dbReference type="NCBI Taxonomy" id="325240"/>
    <lineage>
        <taxon>Bacteria</taxon>
        <taxon>Pseudomonadati</taxon>
        <taxon>Pseudomonadota</taxon>
        <taxon>Gammaproteobacteria</taxon>
        <taxon>Alteromonadales</taxon>
        <taxon>Shewanellaceae</taxon>
        <taxon>Shewanella</taxon>
    </lineage>
</organism>
<feature type="chain" id="PRO_1000069159" description="Proline--tRNA ligase">
    <location>
        <begin position="1"/>
        <end position="571"/>
    </location>
</feature>
<gene>
    <name evidence="1" type="primary">proS</name>
    <name type="ordered locus">Sbal_2856</name>
</gene>
<proteinExistence type="inferred from homology"/>